<reference evidence="5" key="1">
    <citation type="journal article" date="1991" name="Plant Cell">
        <title>Expression patterns of myb genes from Antirrhinum flowers.</title>
        <authorList>
            <person name="Jackson D."/>
            <person name="Culianez-Macia F."/>
            <person name="Prescott A.G."/>
            <person name="Roberts K."/>
            <person name="Martin C."/>
        </authorList>
    </citation>
    <scope>NUCLEOTIDE SEQUENCE [MRNA]</scope>
    <scope>TISSUE SPECIFICITY</scope>
    <scope>DEVELOPMENTAL STAGE</scope>
    <source>
        <strain evidence="3">cv. JI:522</strain>
        <tissue evidence="3">Flower bud</tissue>
    </source>
</reference>
<protein>
    <recommendedName>
        <fullName>Myb-related protein 308</fullName>
    </recommendedName>
</protein>
<feature type="chain" id="PRO_0000291260" description="Myb-related protein 308">
    <location>
        <begin position="1"/>
        <end position="232"/>
    </location>
</feature>
<feature type="domain" description="HTH myb-type 1" evidence="2">
    <location>
        <begin position="9"/>
        <end position="61"/>
    </location>
</feature>
<feature type="domain" description="HTH myb-type 2" evidence="2">
    <location>
        <begin position="62"/>
        <end position="116"/>
    </location>
</feature>
<feature type="DNA-binding region" description="H-T-H motif" evidence="2">
    <location>
        <begin position="37"/>
        <end position="61"/>
    </location>
</feature>
<feature type="DNA-binding region" description="H-T-H motif" evidence="2">
    <location>
        <begin position="89"/>
        <end position="112"/>
    </location>
</feature>
<organism>
    <name type="scientific">Antirrhinum majus</name>
    <name type="common">Garden snapdragon</name>
    <dbReference type="NCBI Taxonomy" id="4151"/>
    <lineage>
        <taxon>Eukaryota</taxon>
        <taxon>Viridiplantae</taxon>
        <taxon>Streptophyta</taxon>
        <taxon>Embryophyta</taxon>
        <taxon>Tracheophyta</taxon>
        <taxon>Spermatophyta</taxon>
        <taxon>Magnoliopsida</taxon>
        <taxon>eudicotyledons</taxon>
        <taxon>Gunneridae</taxon>
        <taxon>Pentapetalae</taxon>
        <taxon>asterids</taxon>
        <taxon>lamiids</taxon>
        <taxon>Lamiales</taxon>
        <taxon>Plantaginaceae</taxon>
        <taxon>Antirrhineae</taxon>
        <taxon>Antirrhinum</taxon>
    </lineage>
</organism>
<comment type="function">
    <text evidence="5">Transcription factor.</text>
</comment>
<comment type="subcellular location">
    <subcellularLocation>
        <location evidence="1 2">Nucleus</location>
    </subcellularLocation>
</comment>
<comment type="tissue specificity">
    <text evidence="3">Expressed in roots, stems, leaves, seed pods and flowers.</text>
</comment>
<comment type="developmental stage">
    <text evidence="3">Expression in flowers increases as the flowers develop.</text>
</comment>
<accession>P81393</accession>
<evidence type="ECO:0000250" key="1">
    <source>
        <dbReference type="UniProtKB" id="Q9FJA2"/>
    </source>
</evidence>
<evidence type="ECO:0000255" key="2">
    <source>
        <dbReference type="PROSITE-ProRule" id="PRU00625"/>
    </source>
</evidence>
<evidence type="ECO:0000269" key="3">
    <source>
    </source>
</evidence>
<evidence type="ECO:0000303" key="4">
    <source>
    </source>
</evidence>
<evidence type="ECO:0000305" key="5"/>
<dbReference type="PIR" id="JQ0960">
    <property type="entry name" value="JQ0960"/>
</dbReference>
<dbReference type="SMR" id="P81393"/>
<dbReference type="GO" id="GO:0005634">
    <property type="term" value="C:nucleus"/>
    <property type="evidence" value="ECO:0007669"/>
    <property type="project" value="UniProtKB-SubCell"/>
</dbReference>
<dbReference type="GO" id="GO:0003677">
    <property type="term" value="F:DNA binding"/>
    <property type="evidence" value="ECO:0007669"/>
    <property type="project" value="UniProtKB-KW"/>
</dbReference>
<dbReference type="CDD" id="cd00167">
    <property type="entry name" value="SANT"/>
    <property type="match status" value="2"/>
</dbReference>
<dbReference type="FunFam" id="1.10.10.60:FF:000695">
    <property type="entry name" value="MYB transcription factor MYB48"/>
    <property type="match status" value="1"/>
</dbReference>
<dbReference type="FunFam" id="1.10.10.60:FF:000001">
    <property type="entry name" value="MYB-related transcription factor"/>
    <property type="match status" value="1"/>
</dbReference>
<dbReference type="Gene3D" id="1.10.10.60">
    <property type="entry name" value="Homeodomain-like"/>
    <property type="match status" value="2"/>
</dbReference>
<dbReference type="InterPro" id="IPR009057">
    <property type="entry name" value="Homeodomain-like_sf"/>
</dbReference>
<dbReference type="InterPro" id="IPR017930">
    <property type="entry name" value="Myb_dom"/>
</dbReference>
<dbReference type="InterPro" id="IPR015495">
    <property type="entry name" value="Myb_TF_plants"/>
</dbReference>
<dbReference type="InterPro" id="IPR001005">
    <property type="entry name" value="SANT/Myb"/>
</dbReference>
<dbReference type="PANTHER" id="PTHR47994">
    <property type="entry name" value="F14D16.11-RELATED"/>
    <property type="match status" value="1"/>
</dbReference>
<dbReference type="PANTHER" id="PTHR47994:SF5">
    <property type="entry name" value="F14D16.11-RELATED"/>
    <property type="match status" value="1"/>
</dbReference>
<dbReference type="Pfam" id="PF00249">
    <property type="entry name" value="Myb_DNA-binding"/>
    <property type="match status" value="2"/>
</dbReference>
<dbReference type="SMART" id="SM00717">
    <property type="entry name" value="SANT"/>
    <property type="match status" value="2"/>
</dbReference>
<dbReference type="SUPFAM" id="SSF46689">
    <property type="entry name" value="Homeodomain-like"/>
    <property type="match status" value="1"/>
</dbReference>
<dbReference type="PROSITE" id="PS51294">
    <property type="entry name" value="HTH_MYB"/>
    <property type="match status" value="2"/>
</dbReference>
<gene>
    <name evidence="4" type="primary">MYB308</name>
</gene>
<sequence length="232" mass="26165">MGRSPCCEKAHTNKGAWTKEEDDRLVAYIRAHGEGCWRSLPKAAGLLRCGKSCRLRWINYLRPDLKRGNFTEEEDELIIKLHSLLGNKWSLIAGRLPGRTDNEIKNYWNTHIRRKLLSRGIDPTTHRSINDGTASQDQVTTISFSNANSKEEDTKHKVAVDIMIKEENSPVQERCPDLNLDLKISPPCQQQINYHQENLKTGGRNGSSTLCFVCRLGIQNSKDCSCSDGVGN</sequence>
<name>MYB08_ANTMA</name>
<proteinExistence type="evidence at transcript level"/>
<keyword id="KW-0238">DNA-binding</keyword>
<keyword id="KW-0539">Nucleus</keyword>
<keyword id="KW-0677">Repeat</keyword>
<keyword id="KW-0804">Transcription</keyword>
<keyword id="KW-0805">Transcription regulation</keyword>